<reference key="1">
    <citation type="journal article" date="2002" name="Nat. Genet.">
        <title>Genome sequence of the endocellular obligate symbiont of tsetse flies, Wigglesworthia glossinidia.</title>
        <authorList>
            <person name="Akman L."/>
            <person name="Yamashita A."/>
            <person name="Watanabe H."/>
            <person name="Oshima K."/>
            <person name="Shiba T."/>
            <person name="Hattori M."/>
            <person name="Aksoy S."/>
        </authorList>
    </citation>
    <scope>NUCLEOTIDE SEQUENCE [LARGE SCALE GENOMIC DNA]</scope>
</reference>
<gene>
    <name evidence="1" type="primary">pyrD</name>
    <name type="ordered locus">WIGBR1310</name>
</gene>
<keyword id="KW-1003">Cell membrane</keyword>
<keyword id="KW-0285">Flavoprotein</keyword>
<keyword id="KW-0288">FMN</keyword>
<keyword id="KW-0472">Membrane</keyword>
<keyword id="KW-0560">Oxidoreductase</keyword>
<keyword id="KW-0665">Pyrimidine biosynthesis</keyword>
<keyword id="KW-1185">Reference proteome</keyword>
<accession>Q8D370</accession>
<proteinExistence type="inferred from homology"/>
<sequence>MIYKIINFILSKKDHEEKKDLLLKIMKFFNKTPLNFLIKNKFPNNNISCMGLNFKNILGLAAGLDKNGDYIKLFSDIGFGFIELGTVTLKPQHGEKKPRLFCFPNVYGIINRMGFNNNGIENLIENIKNEKNVKSILGINIGKNKDTLIEKAKDDYLICINKAYYYSDYISINISSPNTKDLRKLQFGELFSDLLKSIKEEQNKLNKIYNKYVPILIKISPDINNSEIIQISDCLLSYNIDGVIATNTTVNKDIIMRCCNNCEKGGLSGAPLNENSTRIIKKLSKELKGKIPIIGSGGIISVKSAKEKIKAGASLIQIYSGLVFFGLKIIKKLIKSF</sequence>
<comment type="function">
    <text evidence="1">Catalyzes the conversion of dihydroorotate to orotate with quinone as electron acceptor.</text>
</comment>
<comment type="catalytic activity">
    <reaction evidence="1">
        <text>(S)-dihydroorotate + a quinone = orotate + a quinol</text>
        <dbReference type="Rhea" id="RHEA:30187"/>
        <dbReference type="ChEBI" id="CHEBI:24646"/>
        <dbReference type="ChEBI" id="CHEBI:30839"/>
        <dbReference type="ChEBI" id="CHEBI:30864"/>
        <dbReference type="ChEBI" id="CHEBI:132124"/>
        <dbReference type="EC" id="1.3.5.2"/>
    </reaction>
</comment>
<comment type="cofactor">
    <cofactor evidence="1">
        <name>FMN</name>
        <dbReference type="ChEBI" id="CHEBI:58210"/>
    </cofactor>
    <text evidence="1">Binds 1 FMN per subunit.</text>
</comment>
<comment type="pathway">
    <text evidence="1">Pyrimidine metabolism; UMP biosynthesis via de novo pathway; orotate from (S)-dihydroorotate (quinone route): step 1/1.</text>
</comment>
<comment type="subunit">
    <text evidence="1">Monomer.</text>
</comment>
<comment type="subcellular location">
    <subcellularLocation>
        <location evidence="1">Cell membrane</location>
        <topology evidence="1">Peripheral membrane protein</topology>
    </subcellularLocation>
</comment>
<comment type="similarity">
    <text evidence="1">Belongs to the dihydroorotate dehydrogenase family. Type 2 subfamily.</text>
</comment>
<protein>
    <recommendedName>
        <fullName evidence="1">Dihydroorotate dehydrogenase (quinone)</fullName>
        <ecNumber evidence="1">1.3.5.2</ecNumber>
    </recommendedName>
    <alternativeName>
        <fullName evidence="1">DHOdehase</fullName>
        <shortName evidence="1">DHOD</shortName>
        <shortName evidence="1">DHODase</shortName>
    </alternativeName>
    <alternativeName>
        <fullName evidence="1">Dihydroorotate oxidase</fullName>
    </alternativeName>
</protein>
<feature type="chain" id="PRO_1000024243" description="Dihydroorotate dehydrogenase (quinone)">
    <location>
        <begin position="1"/>
        <end position="337"/>
    </location>
</feature>
<feature type="active site" description="Nucleophile" evidence="1">
    <location>
        <position position="176"/>
    </location>
</feature>
<feature type="binding site" evidence="1">
    <location>
        <begin position="62"/>
        <end position="66"/>
    </location>
    <ligand>
        <name>FMN</name>
        <dbReference type="ChEBI" id="CHEBI:58210"/>
    </ligand>
</feature>
<feature type="binding site" evidence="1">
    <location>
        <position position="66"/>
    </location>
    <ligand>
        <name>substrate</name>
    </ligand>
</feature>
<feature type="binding site" evidence="1">
    <location>
        <position position="86"/>
    </location>
    <ligand>
        <name>FMN</name>
        <dbReference type="ChEBI" id="CHEBI:58210"/>
    </ligand>
</feature>
<feature type="binding site" evidence="1">
    <location>
        <begin position="111"/>
        <end position="115"/>
    </location>
    <ligand>
        <name>substrate</name>
    </ligand>
</feature>
<feature type="binding site" evidence="1">
    <location>
        <position position="140"/>
    </location>
    <ligand>
        <name>FMN</name>
        <dbReference type="ChEBI" id="CHEBI:58210"/>
    </ligand>
</feature>
<feature type="binding site" evidence="1">
    <location>
        <position position="173"/>
    </location>
    <ligand>
        <name>FMN</name>
        <dbReference type="ChEBI" id="CHEBI:58210"/>
    </ligand>
</feature>
<feature type="binding site" evidence="1">
    <location>
        <position position="173"/>
    </location>
    <ligand>
        <name>substrate</name>
    </ligand>
</feature>
<feature type="binding site" evidence="1">
    <location>
        <position position="178"/>
    </location>
    <ligand>
        <name>substrate</name>
    </ligand>
</feature>
<feature type="binding site" evidence="1">
    <location>
        <position position="218"/>
    </location>
    <ligand>
        <name>FMN</name>
        <dbReference type="ChEBI" id="CHEBI:58210"/>
    </ligand>
</feature>
<feature type="binding site" evidence="1">
    <location>
        <position position="246"/>
    </location>
    <ligand>
        <name>FMN</name>
        <dbReference type="ChEBI" id="CHEBI:58210"/>
    </ligand>
</feature>
<feature type="binding site" evidence="1">
    <location>
        <begin position="247"/>
        <end position="248"/>
    </location>
    <ligand>
        <name>substrate</name>
    </ligand>
</feature>
<feature type="binding site" evidence="1">
    <location>
        <position position="269"/>
    </location>
    <ligand>
        <name>FMN</name>
        <dbReference type="ChEBI" id="CHEBI:58210"/>
    </ligand>
</feature>
<feature type="binding site" evidence="1">
    <location>
        <position position="298"/>
    </location>
    <ligand>
        <name>FMN</name>
        <dbReference type="ChEBI" id="CHEBI:58210"/>
    </ligand>
</feature>
<feature type="binding site" evidence="1">
    <location>
        <begin position="319"/>
        <end position="320"/>
    </location>
    <ligand>
        <name>FMN</name>
        <dbReference type="ChEBI" id="CHEBI:58210"/>
    </ligand>
</feature>
<name>PYRD_WIGBR</name>
<evidence type="ECO:0000255" key="1">
    <source>
        <dbReference type="HAMAP-Rule" id="MF_00225"/>
    </source>
</evidence>
<dbReference type="EC" id="1.3.5.2" evidence="1"/>
<dbReference type="EMBL" id="BA000021">
    <property type="protein sequence ID" value="BAC24277.1"/>
    <property type="molecule type" value="Genomic_DNA"/>
</dbReference>
<dbReference type="SMR" id="Q8D370"/>
<dbReference type="STRING" id="36870.gene:10368618"/>
<dbReference type="KEGG" id="wbr:pyrD"/>
<dbReference type="eggNOG" id="COG0167">
    <property type="taxonomic scope" value="Bacteria"/>
</dbReference>
<dbReference type="HOGENOM" id="CLU_013640_2_0_6"/>
<dbReference type="OrthoDB" id="9802377at2"/>
<dbReference type="UniPathway" id="UPA00070">
    <property type="reaction ID" value="UER00946"/>
</dbReference>
<dbReference type="Proteomes" id="UP000000562">
    <property type="component" value="Chromosome"/>
</dbReference>
<dbReference type="GO" id="GO:0005737">
    <property type="term" value="C:cytoplasm"/>
    <property type="evidence" value="ECO:0007669"/>
    <property type="project" value="InterPro"/>
</dbReference>
<dbReference type="GO" id="GO:0005886">
    <property type="term" value="C:plasma membrane"/>
    <property type="evidence" value="ECO:0007669"/>
    <property type="project" value="UniProtKB-SubCell"/>
</dbReference>
<dbReference type="GO" id="GO:0106430">
    <property type="term" value="F:dihydroorotate dehydrogenase (quinone) activity"/>
    <property type="evidence" value="ECO:0007669"/>
    <property type="project" value="UniProtKB-EC"/>
</dbReference>
<dbReference type="GO" id="GO:0006207">
    <property type="term" value="P:'de novo' pyrimidine nucleobase biosynthetic process"/>
    <property type="evidence" value="ECO:0007669"/>
    <property type="project" value="InterPro"/>
</dbReference>
<dbReference type="GO" id="GO:0044205">
    <property type="term" value="P:'de novo' UMP biosynthetic process"/>
    <property type="evidence" value="ECO:0007669"/>
    <property type="project" value="UniProtKB-UniRule"/>
</dbReference>
<dbReference type="CDD" id="cd04738">
    <property type="entry name" value="DHOD_2_like"/>
    <property type="match status" value="1"/>
</dbReference>
<dbReference type="Gene3D" id="3.20.20.70">
    <property type="entry name" value="Aldolase class I"/>
    <property type="match status" value="1"/>
</dbReference>
<dbReference type="HAMAP" id="MF_00225">
    <property type="entry name" value="DHO_dh_type2"/>
    <property type="match status" value="1"/>
</dbReference>
<dbReference type="InterPro" id="IPR013785">
    <property type="entry name" value="Aldolase_TIM"/>
</dbReference>
<dbReference type="InterPro" id="IPR050074">
    <property type="entry name" value="DHO_dehydrogenase"/>
</dbReference>
<dbReference type="InterPro" id="IPR012135">
    <property type="entry name" value="Dihydroorotate_DH_1_2"/>
</dbReference>
<dbReference type="InterPro" id="IPR005719">
    <property type="entry name" value="Dihydroorotate_DH_2"/>
</dbReference>
<dbReference type="InterPro" id="IPR005720">
    <property type="entry name" value="Dihydroorotate_DH_cat"/>
</dbReference>
<dbReference type="InterPro" id="IPR001295">
    <property type="entry name" value="Dihydroorotate_DH_CS"/>
</dbReference>
<dbReference type="NCBIfam" id="NF003644">
    <property type="entry name" value="PRK05286.1-1"/>
    <property type="match status" value="1"/>
</dbReference>
<dbReference type="NCBIfam" id="NF003652">
    <property type="entry name" value="PRK05286.2-5"/>
    <property type="match status" value="1"/>
</dbReference>
<dbReference type="NCBIfam" id="TIGR01036">
    <property type="entry name" value="pyrD_sub2"/>
    <property type="match status" value="1"/>
</dbReference>
<dbReference type="PANTHER" id="PTHR48109:SF4">
    <property type="entry name" value="DIHYDROOROTATE DEHYDROGENASE (QUINONE), MITOCHONDRIAL"/>
    <property type="match status" value="1"/>
</dbReference>
<dbReference type="PANTHER" id="PTHR48109">
    <property type="entry name" value="DIHYDROOROTATE DEHYDROGENASE (QUINONE), MITOCHONDRIAL-RELATED"/>
    <property type="match status" value="1"/>
</dbReference>
<dbReference type="Pfam" id="PF01180">
    <property type="entry name" value="DHO_dh"/>
    <property type="match status" value="1"/>
</dbReference>
<dbReference type="PIRSF" id="PIRSF000164">
    <property type="entry name" value="DHO_oxidase"/>
    <property type="match status" value="1"/>
</dbReference>
<dbReference type="SUPFAM" id="SSF51395">
    <property type="entry name" value="FMN-linked oxidoreductases"/>
    <property type="match status" value="1"/>
</dbReference>
<dbReference type="PROSITE" id="PS00912">
    <property type="entry name" value="DHODEHASE_2"/>
    <property type="match status" value="1"/>
</dbReference>
<organism>
    <name type="scientific">Wigglesworthia glossinidia brevipalpis</name>
    <dbReference type="NCBI Taxonomy" id="36870"/>
    <lineage>
        <taxon>Bacteria</taxon>
        <taxon>Pseudomonadati</taxon>
        <taxon>Pseudomonadota</taxon>
        <taxon>Gammaproteobacteria</taxon>
        <taxon>Enterobacterales</taxon>
        <taxon>Erwiniaceae</taxon>
        <taxon>Wigglesworthia</taxon>
    </lineage>
</organism>